<dbReference type="EC" id="2.1.1.199" evidence="1"/>
<dbReference type="EMBL" id="CP000736">
    <property type="protein sequence ID" value="ABR52117.1"/>
    <property type="molecule type" value="Genomic_DNA"/>
</dbReference>
<dbReference type="SMR" id="A6U0Z9"/>
<dbReference type="KEGG" id="sah:SaurJH1_1263"/>
<dbReference type="HOGENOM" id="CLU_038422_2_0_9"/>
<dbReference type="GO" id="GO:0005737">
    <property type="term" value="C:cytoplasm"/>
    <property type="evidence" value="ECO:0007669"/>
    <property type="project" value="UniProtKB-SubCell"/>
</dbReference>
<dbReference type="GO" id="GO:0071424">
    <property type="term" value="F:rRNA (cytosine-N4-)-methyltransferase activity"/>
    <property type="evidence" value="ECO:0007669"/>
    <property type="project" value="UniProtKB-UniRule"/>
</dbReference>
<dbReference type="GO" id="GO:0070475">
    <property type="term" value="P:rRNA base methylation"/>
    <property type="evidence" value="ECO:0007669"/>
    <property type="project" value="UniProtKB-UniRule"/>
</dbReference>
<dbReference type="FunFam" id="1.10.150.170:FF:000001">
    <property type="entry name" value="Ribosomal RNA small subunit methyltransferase H"/>
    <property type="match status" value="1"/>
</dbReference>
<dbReference type="Gene3D" id="1.10.150.170">
    <property type="entry name" value="Putative methyltransferase TM0872, insert domain"/>
    <property type="match status" value="1"/>
</dbReference>
<dbReference type="Gene3D" id="3.40.50.150">
    <property type="entry name" value="Vaccinia Virus protein VP39"/>
    <property type="match status" value="1"/>
</dbReference>
<dbReference type="HAMAP" id="MF_01007">
    <property type="entry name" value="16SrRNA_methyltr_H"/>
    <property type="match status" value="1"/>
</dbReference>
<dbReference type="InterPro" id="IPR002903">
    <property type="entry name" value="RsmH"/>
</dbReference>
<dbReference type="InterPro" id="IPR023397">
    <property type="entry name" value="SAM-dep_MeTrfase_MraW_recog"/>
</dbReference>
<dbReference type="InterPro" id="IPR029063">
    <property type="entry name" value="SAM-dependent_MTases_sf"/>
</dbReference>
<dbReference type="NCBIfam" id="TIGR00006">
    <property type="entry name" value="16S rRNA (cytosine(1402)-N(4))-methyltransferase RsmH"/>
    <property type="match status" value="1"/>
</dbReference>
<dbReference type="PANTHER" id="PTHR11265:SF0">
    <property type="entry name" value="12S RRNA N4-METHYLCYTIDINE METHYLTRANSFERASE"/>
    <property type="match status" value="1"/>
</dbReference>
<dbReference type="PANTHER" id="PTHR11265">
    <property type="entry name" value="S-ADENOSYL-METHYLTRANSFERASE MRAW"/>
    <property type="match status" value="1"/>
</dbReference>
<dbReference type="Pfam" id="PF01795">
    <property type="entry name" value="Methyltransf_5"/>
    <property type="match status" value="1"/>
</dbReference>
<dbReference type="PIRSF" id="PIRSF004486">
    <property type="entry name" value="MraW"/>
    <property type="match status" value="1"/>
</dbReference>
<dbReference type="SUPFAM" id="SSF81799">
    <property type="entry name" value="Putative methyltransferase TM0872, insert domain"/>
    <property type="match status" value="1"/>
</dbReference>
<dbReference type="SUPFAM" id="SSF53335">
    <property type="entry name" value="S-adenosyl-L-methionine-dependent methyltransferases"/>
    <property type="match status" value="1"/>
</dbReference>
<organism>
    <name type="scientific">Staphylococcus aureus (strain JH1)</name>
    <dbReference type="NCBI Taxonomy" id="359787"/>
    <lineage>
        <taxon>Bacteria</taxon>
        <taxon>Bacillati</taxon>
        <taxon>Bacillota</taxon>
        <taxon>Bacilli</taxon>
        <taxon>Bacillales</taxon>
        <taxon>Staphylococcaceae</taxon>
        <taxon>Staphylococcus</taxon>
    </lineage>
</organism>
<evidence type="ECO:0000255" key="1">
    <source>
        <dbReference type="HAMAP-Rule" id="MF_01007"/>
    </source>
</evidence>
<proteinExistence type="inferred from homology"/>
<accession>A6U0Z9</accession>
<gene>
    <name evidence="1" type="primary">rsmH</name>
    <name type="synonym">mraW</name>
    <name type="ordered locus">SaurJH1_1263</name>
</gene>
<protein>
    <recommendedName>
        <fullName evidence="1">Ribosomal RNA small subunit methyltransferase H</fullName>
        <ecNumber evidence="1">2.1.1.199</ecNumber>
    </recommendedName>
    <alternativeName>
        <fullName evidence="1">16S rRNA m(4)C1402 methyltransferase</fullName>
    </alternativeName>
    <alternativeName>
        <fullName evidence="1">rRNA (cytosine-N(4)-)-methyltransferase RsmH</fullName>
    </alternativeName>
</protein>
<feature type="chain" id="PRO_0000387135" description="Ribosomal RNA small subunit methyltransferase H">
    <location>
        <begin position="1"/>
        <end position="311"/>
    </location>
</feature>
<feature type="binding site" evidence="1">
    <location>
        <begin position="32"/>
        <end position="34"/>
    </location>
    <ligand>
        <name>S-adenosyl-L-methionine</name>
        <dbReference type="ChEBI" id="CHEBI:59789"/>
    </ligand>
</feature>
<feature type="binding site" evidence="1">
    <location>
        <position position="52"/>
    </location>
    <ligand>
        <name>S-adenosyl-L-methionine</name>
        <dbReference type="ChEBI" id="CHEBI:59789"/>
    </ligand>
</feature>
<feature type="binding site" evidence="1">
    <location>
        <position position="79"/>
    </location>
    <ligand>
        <name>S-adenosyl-L-methionine</name>
        <dbReference type="ChEBI" id="CHEBI:59789"/>
    </ligand>
</feature>
<feature type="binding site" evidence="1">
    <location>
        <position position="100"/>
    </location>
    <ligand>
        <name>S-adenosyl-L-methionine</name>
        <dbReference type="ChEBI" id="CHEBI:59789"/>
    </ligand>
</feature>
<feature type="binding site" evidence="1">
    <location>
        <position position="107"/>
    </location>
    <ligand>
        <name>S-adenosyl-L-methionine</name>
        <dbReference type="ChEBI" id="CHEBI:59789"/>
    </ligand>
</feature>
<name>RSMH_STAA2</name>
<keyword id="KW-0963">Cytoplasm</keyword>
<keyword id="KW-0489">Methyltransferase</keyword>
<keyword id="KW-0698">rRNA processing</keyword>
<keyword id="KW-0949">S-adenosyl-L-methionine</keyword>
<keyword id="KW-0808">Transferase</keyword>
<comment type="function">
    <text evidence="1">Specifically methylates the N4 position of cytidine in position 1402 (C1402) of 16S rRNA.</text>
</comment>
<comment type="catalytic activity">
    <reaction evidence="1">
        <text>cytidine(1402) in 16S rRNA + S-adenosyl-L-methionine = N(4)-methylcytidine(1402) in 16S rRNA + S-adenosyl-L-homocysteine + H(+)</text>
        <dbReference type="Rhea" id="RHEA:42928"/>
        <dbReference type="Rhea" id="RHEA-COMP:10286"/>
        <dbReference type="Rhea" id="RHEA-COMP:10287"/>
        <dbReference type="ChEBI" id="CHEBI:15378"/>
        <dbReference type="ChEBI" id="CHEBI:57856"/>
        <dbReference type="ChEBI" id="CHEBI:59789"/>
        <dbReference type="ChEBI" id="CHEBI:74506"/>
        <dbReference type="ChEBI" id="CHEBI:82748"/>
        <dbReference type="EC" id="2.1.1.199"/>
    </reaction>
</comment>
<comment type="subcellular location">
    <subcellularLocation>
        <location evidence="1">Cytoplasm</location>
    </subcellularLocation>
</comment>
<comment type="similarity">
    <text evidence="1">Belongs to the methyltransferase superfamily. RsmH family.</text>
</comment>
<sequence>MFHHISVMLNETIDYLNVKENGVYIDCTLGGAGHALYLLNQLNDDGRLIAIDQDQTAIDNAKEVLKDHLHKVTFVHSNFRELTQILKDLNIEKVDGIYYDLGVSSPQLDIPERGFSYHHDATLDMRMDQTQELTAYEIVNNWSYEALVKIFYRYGEEKFSKQIARRIEAHREQQPITTTLELVDIIKEGIPAKARRKGGHPAKRVFQALRIAVNDELSAFEDSIEQAIELVKVDGRISVITFHSLEDRLCKQVFQEYEKGPEVPRGLPVIPEAYTPKLKRVNRKPITATEEDLDDNNRARSAKLRVAEILK</sequence>
<reference key="1">
    <citation type="submission" date="2007-06" db="EMBL/GenBank/DDBJ databases">
        <title>Complete sequence of chromosome of Staphylococcus aureus subsp. aureus JH1.</title>
        <authorList>
            <consortium name="US DOE Joint Genome Institute"/>
            <person name="Copeland A."/>
            <person name="Lucas S."/>
            <person name="Lapidus A."/>
            <person name="Barry K."/>
            <person name="Detter J.C."/>
            <person name="Glavina del Rio T."/>
            <person name="Hammon N."/>
            <person name="Israni S."/>
            <person name="Dalin E."/>
            <person name="Tice H."/>
            <person name="Pitluck S."/>
            <person name="Chain P."/>
            <person name="Malfatti S."/>
            <person name="Shin M."/>
            <person name="Vergez L."/>
            <person name="Schmutz J."/>
            <person name="Larimer F."/>
            <person name="Land M."/>
            <person name="Hauser L."/>
            <person name="Kyrpides N."/>
            <person name="Ivanova N."/>
            <person name="Tomasz A."/>
            <person name="Richardson P."/>
        </authorList>
    </citation>
    <scope>NUCLEOTIDE SEQUENCE [LARGE SCALE GENOMIC DNA]</scope>
    <source>
        <strain>JH1</strain>
    </source>
</reference>